<name>GREA_HALHL</name>
<reference key="1">
    <citation type="submission" date="2006-12" db="EMBL/GenBank/DDBJ databases">
        <title>Complete sequence of Halorhodospira halophila SL1.</title>
        <authorList>
            <consortium name="US DOE Joint Genome Institute"/>
            <person name="Copeland A."/>
            <person name="Lucas S."/>
            <person name="Lapidus A."/>
            <person name="Barry K."/>
            <person name="Detter J.C."/>
            <person name="Glavina del Rio T."/>
            <person name="Hammon N."/>
            <person name="Israni S."/>
            <person name="Dalin E."/>
            <person name="Tice H."/>
            <person name="Pitluck S."/>
            <person name="Saunders E."/>
            <person name="Brettin T."/>
            <person name="Bruce D."/>
            <person name="Han C."/>
            <person name="Tapia R."/>
            <person name="Schmutz J."/>
            <person name="Larimer F."/>
            <person name="Land M."/>
            <person name="Hauser L."/>
            <person name="Kyrpides N."/>
            <person name="Mikhailova N."/>
            <person name="Hoff W."/>
            <person name="Richardson P."/>
        </authorList>
    </citation>
    <scope>NUCLEOTIDE SEQUENCE [LARGE SCALE GENOMIC DNA]</scope>
    <source>
        <strain>DSM 244 / SL1</strain>
    </source>
</reference>
<organism>
    <name type="scientific">Halorhodospira halophila (strain DSM 244 / SL1)</name>
    <name type="common">Ectothiorhodospira halophila (strain DSM 244 / SL1)</name>
    <dbReference type="NCBI Taxonomy" id="349124"/>
    <lineage>
        <taxon>Bacteria</taxon>
        <taxon>Pseudomonadati</taxon>
        <taxon>Pseudomonadota</taxon>
        <taxon>Gammaproteobacteria</taxon>
        <taxon>Chromatiales</taxon>
        <taxon>Ectothiorhodospiraceae</taxon>
        <taxon>Halorhodospira</taxon>
    </lineage>
</organism>
<gene>
    <name evidence="1" type="primary">greA</name>
    <name type="ordered locus">Hhal_1774</name>
</gene>
<accession>A1WXX6</accession>
<sequence>MSKIPLTIRGAEKLREELHRLKHEDRPRVIQAIAEAREHGDLKENAEYHAAREQQSFIEGRIQEIEGKLSNAQIIDPAAVQAAPKIVFGATVALEDTDTEETVTYQIVGEDEADIKQHLISVNSPIARALIGKEEGDEAVVQAPGGERTYEIVEVRYE</sequence>
<keyword id="KW-0175">Coiled coil</keyword>
<keyword id="KW-0238">DNA-binding</keyword>
<keyword id="KW-1185">Reference proteome</keyword>
<keyword id="KW-0804">Transcription</keyword>
<keyword id="KW-0805">Transcription regulation</keyword>
<proteinExistence type="inferred from homology"/>
<protein>
    <recommendedName>
        <fullName evidence="1">Transcription elongation factor GreA</fullName>
    </recommendedName>
    <alternativeName>
        <fullName evidence="1">Transcript cleavage factor GreA</fullName>
    </alternativeName>
</protein>
<dbReference type="EMBL" id="CP000544">
    <property type="protein sequence ID" value="ABM62538.1"/>
    <property type="molecule type" value="Genomic_DNA"/>
</dbReference>
<dbReference type="RefSeq" id="WP_011814560.1">
    <property type="nucleotide sequence ID" value="NC_008789.1"/>
</dbReference>
<dbReference type="SMR" id="A1WXX6"/>
<dbReference type="STRING" id="349124.Hhal_1774"/>
<dbReference type="KEGG" id="hha:Hhal_1774"/>
<dbReference type="eggNOG" id="COG0782">
    <property type="taxonomic scope" value="Bacteria"/>
</dbReference>
<dbReference type="HOGENOM" id="CLU_101379_2_0_6"/>
<dbReference type="OrthoDB" id="9808774at2"/>
<dbReference type="Proteomes" id="UP000000647">
    <property type="component" value="Chromosome"/>
</dbReference>
<dbReference type="GO" id="GO:0003677">
    <property type="term" value="F:DNA binding"/>
    <property type="evidence" value="ECO:0007669"/>
    <property type="project" value="UniProtKB-UniRule"/>
</dbReference>
<dbReference type="GO" id="GO:0070063">
    <property type="term" value="F:RNA polymerase binding"/>
    <property type="evidence" value="ECO:0007669"/>
    <property type="project" value="InterPro"/>
</dbReference>
<dbReference type="GO" id="GO:0006354">
    <property type="term" value="P:DNA-templated transcription elongation"/>
    <property type="evidence" value="ECO:0007669"/>
    <property type="project" value="TreeGrafter"/>
</dbReference>
<dbReference type="GO" id="GO:0032784">
    <property type="term" value="P:regulation of DNA-templated transcription elongation"/>
    <property type="evidence" value="ECO:0007669"/>
    <property type="project" value="UniProtKB-UniRule"/>
</dbReference>
<dbReference type="FunFam" id="1.10.287.180:FF:000001">
    <property type="entry name" value="Transcription elongation factor GreA"/>
    <property type="match status" value="1"/>
</dbReference>
<dbReference type="FunFam" id="3.10.50.30:FF:000001">
    <property type="entry name" value="Transcription elongation factor GreA"/>
    <property type="match status" value="1"/>
</dbReference>
<dbReference type="Gene3D" id="3.10.50.30">
    <property type="entry name" value="Transcription elongation factor, GreA/GreB, C-terminal domain"/>
    <property type="match status" value="1"/>
</dbReference>
<dbReference type="Gene3D" id="1.10.287.180">
    <property type="entry name" value="Transcription elongation factor, GreA/GreB, N-terminal domain"/>
    <property type="match status" value="1"/>
</dbReference>
<dbReference type="HAMAP" id="MF_00105">
    <property type="entry name" value="GreA_GreB"/>
    <property type="match status" value="1"/>
</dbReference>
<dbReference type="InterPro" id="IPR036953">
    <property type="entry name" value="GreA/GreB_C_sf"/>
</dbReference>
<dbReference type="InterPro" id="IPR018151">
    <property type="entry name" value="TF_GreA/GreB_CS"/>
</dbReference>
<dbReference type="InterPro" id="IPR006359">
    <property type="entry name" value="Tscrpt_elong_fac_GreA"/>
</dbReference>
<dbReference type="InterPro" id="IPR028624">
    <property type="entry name" value="Tscrpt_elong_fac_GreA/B"/>
</dbReference>
<dbReference type="InterPro" id="IPR001437">
    <property type="entry name" value="Tscrpt_elong_fac_GreA/B_C"/>
</dbReference>
<dbReference type="InterPro" id="IPR023459">
    <property type="entry name" value="Tscrpt_elong_fac_GreA/B_fam"/>
</dbReference>
<dbReference type="InterPro" id="IPR022691">
    <property type="entry name" value="Tscrpt_elong_fac_GreA/B_N"/>
</dbReference>
<dbReference type="InterPro" id="IPR036805">
    <property type="entry name" value="Tscrpt_elong_fac_GreA/B_N_sf"/>
</dbReference>
<dbReference type="NCBIfam" id="TIGR01462">
    <property type="entry name" value="greA"/>
    <property type="match status" value="1"/>
</dbReference>
<dbReference type="NCBIfam" id="NF001261">
    <property type="entry name" value="PRK00226.1-2"/>
    <property type="match status" value="1"/>
</dbReference>
<dbReference type="NCBIfam" id="NF001263">
    <property type="entry name" value="PRK00226.1-4"/>
    <property type="match status" value="1"/>
</dbReference>
<dbReference type="NCBIfam" id="NF001264">
    <property type="entry name" value="PRK00226.1-5"/>
    <property type="match status" value="1"/>
</dbReference>
<dbReference type="PANTHER" id="PTHR30437">
    <property type="entry name" value="TRANSCRIPTION ELONGATION FACTOR GREA"/>
    <property type="match status" value="1"/>
</dbReference>
<dbReference type="PANTHER" id="PTHR30437:SF4">
    <property type="entry name" value="TRANSCRIPTION ELONGATION FACTOR GREA"/>
    <property type="match status" value="1"/>
</dbReference>
<dbReference type="Pfam" id="PF01272">
    <property type="entry name" value="GreA_GreB"/>
    <property type="match status" value="1"/>
</dbReference>
<dbReference type="Pfam" id="PF03449">
    <property type="entry name" value="GreA_GreB_N"/>
    <property type="match status" value="1"/>
</dbReference>
<dbReference type="PIRSF" id="PIRSF006092">
    <property type="entry name" value="GreA_GreB"/>
    <property type="match status" value="1"/>
</dbReference>
<dbReference type="SUPFAM" id="SSF54534">
    <property type="entry name" value="FKBP-like"/>
    <property type="match status" value="1"/>
</dbReference>
<dbReference type="SUPFAM" id="SSF46557">
    <property type="entry name" value="GreA transcript cleavage protein, N-terminal domain"/>
    <property type="match status" value="1"/>
</dbReference>
<dbReference type="PROSITE" id="PS00829">
    <property type="entry name" value="GREAB_1"/>
    <property type="match status" value="1"/>
</dbReference>
<dbReference type="PROSITE" id="PS00830">
    <property type="entry name" value="GREAB_2"/>
    <property type="match status" value="1"/>
</dbReference>
<feature type="chain" id="PRO_1000034264" description="Transcription elongation factor GreA">
    <location>
        <begin position="1"/>
        <end position="158"/>
    </location>
</feature>
<feature type="coiled-coil region" evidence="1">
    <location>
        <begin position="53"/>
        <end position="73"/>
    </location>
</feature>
<comment type="function">
    <text evidence="1">Necessary for efficient RNA polymerase transcription elongation past template-encoded arresting sites. The arresting sites in DNA have the property of trapping a certain fraction of elongating RNA polymerases that pass through, resulting in locked ternary complexes. Cleavage of the nascent transcript by cleavage factors such as GreA or GreB allows the resumption of elongation from the new 3'terminus. GreA releases sequences of 2 to 3 nucleotides.</text>
</comment>
<comment type="similarity">
    <text evidence="1">Belongs to the GreA/GreB family.</text>
</comment>
<evidence type="ECO:0000255" key="1">
    <source>
        <dbReference type="HAMAP-Rule" id="MF_00105"/>
    </source>
</evidence>